<sequence length="714" mass="81681">MSMSYRALKFRRHAPTSTQHHPKEDMNFHQQPPGLPGPALGQTMSPPPWQMGESNPDFLPNNFNQLNLDPQQPEADGGQQRSKGSENNLYRKYEEKVRPCIDLIDSLRALGVEQDLALPAIAVIGDQSSGKSSVLEALSGVALPRGSGIITRCPLVLKLTKRECEWTGKITYRNVTQQLHNPSEVEREIRRAQNIIAGNGVGISHELINLEVTSPEVPDLTLIDLPGITRVAVENQPQDIGLQIKALIKTYIQRQETINLVVVPCNVDIATTEALSMAQEVDPDGDRTIGILTKPDLVDKGTEKGVLKVMQNLTYHLKKGYMIVKCRGQQDITNKLSLAEATRKEVMFFQTHPYFRVLLDEGKATVPLLAERLTTELIWHINKSLPLLENQIKEKHQRATEELQQYGDDIPSNEGDKMFFLIEKIKLFNEDIEKLIEGEEIVIETESRLCNRIREEFTRWVLILTTNIEKVKSILNEEVSKYETKYRGKELLGFVNYKTFETVVKHYLGQLIDPALKMLQKAMEIIWQTFKDTAKKHFAEFCNLHQTVQNKIEDIKTKQMAEAANLIQLQFRMEKLVFCQDQIYGVVLNKVREEIFNSVGKASENPQSKHPFLNNQSSVSSIVEIGVHLNAYFTETSKRLANQIPFIIQYFMLQENGDKVQKAMMQLLQETQHYSWLLQEQSDTATKRKFLKEKIFRLTQAQQALYEFPHFKSI</sequence>
<keyword id="KW-0051">Antiviral defense</keyword>
<keyword id="KW-0963">Cytoplasm</keyword>
<keyword id="KW-0342">GTP-binding</keyword>
<keyword id="KW-0391">Immunity</keyword>
<keyword id="KW-0399">Innate immunity</keyword>
<keyword id="KW-0547">Nucleotide-binding</keyword>
<keyword id="KW-0539">Nucleus</keyword>
<keyword id="KW-1185">Reference proteome</keyword>
<proteinExistence type="evidence at transcript level"/>
<organism>
    <name type="scientific">Ovis aries</name>
    <name type="common">Sheep</name>
    <dbReference type="NCBI Taxonomy" id="9940"/>
    <lineage>
        <taxon>Eukaryota</taxon>
        <taxon>Metazoa</taxon>
        <taxon>Chordata</taxon>
        <taxon>Craniata</taxon>
        <taxon>Vertebrata</taxon>
        <taxon>Euteleostomi</taxon>
        <taxon>Mammalia</taxon>
        <taxon>Eutheria</taxon>
        <taxon>Laurasiatheria</taxon>
        <taxon>Artiodactyla</taxon>
        <taxon>Ruminantia</taxon>
        <taxon>Pecora</taxon>
        <taxon>Bovidae</taxon>
        <taxon>Caprinae</taxon>
        <taxon>Ovis</taxon>
    </lineage>
</organism>
<accession>Q5I2P5</accession>
<dbReference type="EMBL" id="AY859475">
    <property type="protein sequence ID" value="AAW51454.1"/>
    <property type="molecule type" value="mRNA"/>
</dbReference>
<dbReference type="RefSeq" id="NP_001072120.1">
    <property type="nucleotide sequence ID" value="NM_001078652.1"/>
</dbReference>
<dbReference type="SMR" id="Q5I2P5"/>
<dbReference type="STRING" id="9940.ENSOARP00000010974"/>
<dbReference type="PaxDb" id="9940-ENSOARP00000010974"/>
<dbReference type="GeneID" id="780441"/>
<dbReference type="KEGG" id="oas:780441"/>
<dbReference type="CTD" id="4600"/>
<dbReference type="eggNOG" id="KOG0446">
    <property type="taxonomic scope" value="Eukaryota"/>
</dbReference>
<dbReference type="OrthoDB" id="5061070at2759"/>
<dbReference type="Proteomes" id="UP000002356">
    <property type="component" value="Unplaced"/>
</dbReference>
<dbReference type="GO" id="GO:0005737">
    <property type="term" value="C:cytoplasm"/>
    <property type="evidence" value="ECO:0007669"/>
    <property type="project" value="UniProtKB-SubCell"/>
</dbReference>
<dbReference type="GO" id="GO:0005874">
    <property type="term" value="C:microtubule"/>
    <property type="evidence" value="ECO:0007669"/>
    <property type="project" value="TreeGrafter"/>
</dbReference>
<dbReference type="GO" id="GO:0005634">
    <property type="term" value="C:nucleus"/>
    <property type="evidence" value="ECO:0007669"/>
    <property type="project" value="UniProtKB-SubCell"/>
</dbReference>
<dbReference type="GO" id="GO:0005886">
    <property type="term" value="C:plasma membrane"/>
    <property type="evidence" value="ECO:0007669"/>
    <property type="project" value="TreeGrafter"/>
</dbReference>
<dbReference type="GO" id="GO:0098793">
    <property type="term" value="C:presynapse"/>
    <property type="evidence" value="ECO:0007669"/>
    <property type="project" value="GOC"/>
</dbReference>
<dbReference type="GO" id="GO:0005525">
    <property type="term" value="F:GTP binding"/>
    <property type="evidence" value="ECO:0007669"/>
    <property type="project" value="UniProtKB-KW"/>
</dbReference>
<dbReference type="GO" id="GO:0003924">
    <property type="term" value="F:GTPase activity"/>
    <property type="evidence" value="ECO:0007669"/>
    <property type="project" value="InterPro"/>
</dbReference>
<dbReference type="GO" id="GO:0008017">
    <property type="term" value="F:microtubule binding"/>
    <property type="evidence" value="ECO:0007669"/>
    <property type="project" value="TreeGrafter"/>
</dbReference>
<dbReference type="GO" id="GO:0051607">
    <property type="term" value="P:defense response to virus"/>
    <property type="evidence" value="ECO:0007669"/>
    <property type="project" value="UniProtKB-KW"/>
</dbReference>
<dbReference type="GO" id="GO:0045087">
    <property type="term" value="P:innate immune response"/>
    <property type="evidence" value="ECO:0007669"/>
    <property type="project" value="UniProtKB-KW"/>
</dbReference>
<dbReference type="GO" id="GO:0031623">
    <property type="term" value="P:receptor internalization"/>
    <property type="evidence" value="ECO:0007669"/>
    <property type="project" value="TreeGrafter"/>
</dbReference>
<dbReference type="GO" id="GO:0016185">
    <property type="term" value="P:synaptic vesicle budding from presynaptic endocytic zone membrane"/>
    <property type="evidence" value="ECO:0007669"/>
    <property type="project" value="TreeGrafter"/>
</dbReference>
<dbReference type="CDD" id="cd08771">
    <property type="entry name" value="DLP_1"/>
    <property type="match status" value="1"/>
</dbReference>
<dbReference type="FunFam" id="1.20.120.1240:FF:000007">
    <property type="entry name" value="Interferon-induced GTP-binding protein Mx1"/>
    <property type="match status" value="1"/>
</dbReference>
<dbReference type="FunFam" id="3.40.50.300:FF:000621">
    <property type="entry name" value="Interferon-induced GTP-binding protein Mx1"/>
    <property type="match status" value="1"/>
</dbReference>
<dbReference type="Gene3D" id="1.20.120.1240">
    <property type="entry name" value="Dynamin, middle domain"/>
    <property type="match status" value="1"/>
</dbReference>
<dbReference type="Gene3D" id="3.40.50.300">
    <property type="entry name" value="P-loop containing nucleotide triphosphate hydrolases"/>
    <property type="match status" value="1"/>
</dbReference>
<dbReference type="InterPro" id="IPR022812">
    <property type="entry name" value="Dynamin"/>
</dbReference>
<dbReference type="InterPro" id="IPR001401">
    <property type="entry name" value="Dynamin_GTPase"/>
</dbReference>
<dbReference type="InterPro" id="IPR019762">
    <property type="entry name" value="Dynamin_GTPase_CS"/>
</dbReference>
<dbReference type="InterPro" id="IPR045063">
    <property type="entry name" value="Dynamin_N"/>
</dbReference>
<dbReference type="InterPro" id="IPR000375">
    <property type="entry name" value="Dynamin_stalk"/>
</dbReference>
<dbReference type="InterPro" id="IPR030381">
    <property type="entry name" value="G_DYNAMIN_dom"/>
</dbReference>
<dbReference type="InterPro" id="IPR003130">
    <property type="entry name" value="GED"/>
</dbReference>
<dbReference type="InterPro" id="IPR020850">
    <property type="entry name" value="GED_dom"/>
</dbReference>
<dbReference type="InterPro" id="IPR027417">
    <property type="entry name" value="P-loop_NTPase"/>
</dbReference>
<dbReference type="PANTHER" id="PTHR11566">
    <property type="entry name" value="DYNAMIN"/>
    <property type="match status" value="1"/>
</dbReference>
<dbReference type="PANTHER" id="PTHR11566:SF46">
    <property type="entry name" value="INTERFERON-INDUCED GTP-BINDING PROTEIN MX2"/>
    <property type="match status" value="1"/>
</dbReference>
<dbReference type="Pfam" id="PF01031">
    <property type="entry name" value="Dynamin_M"/>
    <property type="match status" value="1"/>
</dbReference>
<dbReference type="Pfam" id="PF00350">
    <property type="entry name" value="Dynamin_N"/>
    <property type="match status" value="1"/>
</dbReference>
<dbReference type="Pfam" id="PF02212">
    <property type="entry name" value="GED"/>
    <property type="match status" value="1"/>
</dbReference>
<dbReference type="PRINTS" id="PR00195">
    <property type="entry name" value="DYNAMIN"/>
</dbReference>
<dbReference type="SMART" id="SM00053">
    <property type="entry name" value="DYNc"/>
    <property type="match status" value="1"/>
</dbReference>
<dbReference type="SMART" id="SM00302">
    <property type="entry name" value="GED"/>
    <property type="match status" value="1"/>
</dbReference>
<dbReference type="SUPFAM" id="SSF52540">
    <property type="entry name" value="P-loop containing nucleoside triphosphate hydrolases"/>
    <property type="match status" value="1"/>
</dbReference>
<dbReference type="PROSITE" id="PS00410">
    <property type="entry name" value="G_DYNAMIN_1"/>
    <property type="match status" value="1"/>
</dbReference>
<dbReference type="PROSITE" id="PS51718">
    <property type="entry name" value="G_DYNAMIN_2"/>
    <property type="match status" value="1"/>
</dbReference>
<dbReference type="PROSITE" id="PS51388">
    <property type="entry name" value="GED"/>
    <property type="match status" value="1"/>
</dbReference>
<feature type="chain" id="PRO_0000319960" description="Interferon-induced GTP-binding protein Mx2">
    <location>
        <begin position="1"/>
        <end position="714"/>
    </location>
</feature>
<feature type="domain" description="Dynamin-type G" evidence="4">
    <location>
        <begin position="115"/>
        <end position="386"/>
    </location>
</feature>
<feature type="domain" description="GED" evidence="3">
    <location>
        <begin position="622"/>
        <end position="713"/>
    </location>
</feature>
<feature type="region of interest" description="Disordered" evidence="5">
    <location>
        <begin position="1"/>
        <end position="89"/>
    </location>
</feature>
<feature type="region of interest" description="G1 motif" evidence="4">
    <location>
        <begin position="125"/>
        <end position="132"/>
    </location>
</feature>
<feature type="region of interest" description="G2 motif" evidence="4">
    <location>
        <begin position="150"/>
        <end position="152"/>
    </location>
</feature>
<feature type="region of interest" description="G3 motif" evidence="4">
    <location>
        <begin position="224"/>
        <end position="227"/>
    </location>
</feature>
<feature type="region of interest" description="G4 motif" evidence="4">
    <location>
        <begin position="293"/>
        <end position="296"/>
    </location>
</feature>
<feature type="region of interest" description="G5 motif" evidence="4">
    <location>
        <begin position="325"/>
        <end position="328"/>
    </location>
</feature>
<feature type="compositionally biased region" description="Polar residues" evidence="5">
    <location>
        <begin position="61"/>
        <end position="70"/>
    </location>
</feature>
<feature type="compositionally biased region" description="Polar residues" evidence="5">
    <location>
        <begin position="79"/>
        <end position="88"/>
    </location>
</feature>
<feature type="binding site" evidence="2">
    <location>
        <begin position="125"/>
        <end position="132"/>
    </location>
    <ligand>
        <name>GTP</name>
        <dbReference type="ChEBI" id="CHEBI:37565"/>
    </ligand>
</feature>
<feature type="binding site" evidence="2">
    <location>
        <begin position="224"/>
        <end position="228"/>
    </location>
    <ligand>
        <name>GTP</name>
        <dbReference type="ChEBI" id="CHEBI:37565"/>
    </ligand>
</feature>
<feature type="binding site" evidence="2">
    <location>
        <begin position="293"/>
        <end position="296"/>
    </location>
    <ligand>
        <name>GTP</name>
        <dbReference type="ChEBI" id="CHEBI:37565"/>
    </ligand>
</feature>
<evidence type="ECO:0000250" key="1"/>
<evidence type="ECO:0000255" key="2"/>
<evidence type="ECO:0000255" key="3">
    <source>
        <dbReference type="PROSITE-ProRule" id="PRU00720"/>
    </source>
</evidence>
<evidence type="ECO:0000255" key="4">
    <source>
        <dbReference type="PROSITE-ProRule" id="PRU01055"/>
    </source>
</evidence>
<evidence type="ECO:0000256" key="5">
    <source>
        <dbReference type="SAM" id="MobiDB-lite"/>
    </source>
</evidence>
<evidence type="ECO:0000269" key="6">
    <source>
    </source>
</evidence>
<reference key="1">
    <citation type="submission" date="2004-12" db="EMBL/GenBank/DDBJ databases">
        <title>Cloning and characterization of a second Mx gene (Mx2) from pregnant sheep endometrium.</title>
        <authorList>
            <person name="Assiri A.M."/>
            <person name="Welker J.E."/>
            <person name="Ott T.L."/>
        </authorList>
    </citation>
    <scope>NUCLEOTIDE SEQUENCE [MRNA]</scope>
    <source>
        <tissue>Endometrium</tissue>
    </source>
</reference>
<reference key="2">
    <citation type="journal article" date="2007" name="Microbes Infect.">
        <title>The Mx GTPase family of interferon-induced antiviral proteins.</title>
        <authorList>
            <person name="Haller O."/>
            <person name="Stertz S."/>
            <person name="Kochs G."/>
        </authorList>
    </citation>
    <scope>REVIEW</scope>
    <scope>INDUCTION</scope>
</reference>
<name>MX2_SHEEP</name>
<comment type="function">
    <text evidence="1">Interferon-induced dynamin-like GTPase with antiviral activity.</text>
</comment>
<comment type="subcellular location">
    <subcellularLocation>
        <location evidence="1">Cytoplasm</location>
    </subcellularLocation>
    <subcellularLocation>
        <location evidence="1">Nucleus</location>
    </subcellularLocation>
</comment>
<comment type="induction">
    <text evidence="6">By type I and type III interferons.</text>
</comment>
<comment type="similarity">
    <text evidence="4">Belongs to the TRAFAC class dynamin-like GTPase superfamily. Dynamin/Fzo/YdjA family.</text>
</comment>
<protein>
    <recommendedName>
        <fullName>Interferon-induced GTP-binding protein Mx2</fullName>
    </recommendedName>
    <alternativeName>
        <fullName>Myxovirus resistance protein 2</fullName>
    </alternativeName>
</protein>
<gene>
    <name type="primary">MX2</name>
</gene>